<evidence type="ECO:0000255" key="1">
    <source>
        <dbReference type="HAMAP-Rule" id="MF_00559"/>
    </source>
</evidence>
<evidence type="ECO:0000256" key="2">
    <source>
        <dbReference type="SAM" id="MobiDB-lite"/>
    </source>
</evidence>
<feature type="chain" id="PRO_0000145724" description="Glyceraldehyde-3-phosphate dehydrogenase">
    <location>
        <begin position="1"/>
        <end position="350"/>
    </location>
</feature>
<feature type="region of interest" description="Disordered" evidence="2">
    <location>
        <begin position="327"/>
        <end position="350"/>
    </location>
</feature>
<feature type="active site" description="Nucleophile" evidence="1">
    <location>
        <position position="148"/>
    </location>
</feature>
<feature type="binding site" evidence="1">
    <location>
        <begin position="13"/>
        <end position="14"/>
    </location>
    <ligand>
        <name>NAD(+)</name>
        <dbReference type="ChEBI" id="CHEBI:57540"/>
    </ligand>
</feature>
<feature type="binding site" evidence="1">
    <location>
        <position position="118"/>
    </location>
    <ligand>
        <name>NAD(+)</name>
        <dbReference type="ChEBI" id="CHEBI:57540"/>
    </ligand>
</feature>
<feature type="binding site" evidence="1">
    <location>
        <begin position="147"/>
        <end position="149"/>
    </location>
    <ligand>
        <name>D-glyceraldehyde 3-phosphate</name>
        <dbReference type="ChEBI" id="CHEBI:59776"/>
    </ligand>
</feature>
<feature type="binding site" evidence="1">
    <location>
        <position position="176"/>
    </location>
    <ligand>
        <name>NAD(+)</name>
        <dbReference type="ChEBI" id="CHEBI:57540"/>
    </ligand>
</feature>
<feature type="binding site" evidence="1">
    <location>
        <begin position="202"/>
        <end position="203"/>
    </location>
    <ligand>
        <name>D-glyceraldehyde 3-phosphate</name>
        <dbReference type="ChEBI" id="CHEBI:59776"/>
    </ligand>
</feature>
<feature type="binding site" evidence="1">
    <location>
        <position position="309"/>
    </location>
    <ligand>
        <name>NAD(+)</name>
        <dbReference type="ChEBI" id="CHEBI:57540"/>
    </ligand>
</feature>
<name>G3P_METKA</name>
<keyword id="KW-0963">Cytoplasm</keyword>
<keyword id="KW-0324">Glycolysis</keyword>
<keyword id="KW-0520">NAD</keyword>
<keyword id="KW-0521">NADP</keyword>
<keyword id="KW-0560">Oxidoreductase</keyword>
<keyword id="KW-1185">Reference proteome</keyword>
<dbReference type="EC" id="1.2.1.59" evidence="1"/>
<dbReference type="EMBL" id="AE009439">
    <property type="protein sequence ID" value="AAM01833.1"/>
    <property type="molecule type" value="Genomic_DNA"/>
</dbReference>
<dbReference type="RefSeq" id="WP_011018988.1">
    <property type="nucleotide sequence ID" value="NC_003551.1"/>
</dbReference>
<dbReference type="SMR" id="P58839"/>
<dbReference type="FunCoup" id="P58839">
    <property type="interactions" value="149"/>
</dbReference>
<dbReference type="STRING" id="190192.MK0618"/>
<dbReference type="PaxDb" id="190192-MK0618"/>
<dbReference type="EnsemblBacteria" id="AAM01833">
    <property type="protein sequence ID" value="AAM01833"/>
    <property type="gene ID" value="MK0618"/>
</dbReference>
<dbReference type="GeneID" id="1476719"/>
<dbReference type="KEGG" id="mka:MK0618"/>
<dbReference type="PATRIC" id="fig|190192.8.peg.655"/>
<dbReference type="HOGENOM" id="CLU_069533_0_0_2"/>
<dbReference type="InParanoid" id="P58839"/>
<dbReference type="OrthoDB" id="295712at2157"/>
<dbReference type="UniPathway" id="UPA00109">
    <property type="reaction ID" value="UER00184"/>
</dbReference>
<dbReference type="Proteomes" id="UP000001826">
    <property type="component" value="Chromosome"/>
</dbReference>
<dbReference type="GO" id="GO:0005737">
    <property type="term" value="C:cytoplasm"/>
    <property type="evidence" value="ECO:0007669"/>
    <property type="project" value="UniProtKB-SubCell"/>
</dbReference>
<dbReference type="GO" id="GO:0004365">
    <property type="term" value="F:glyceraldehyde-3-phosphate dehydrogenase (NAD+) (phosphorylating) activity"/>
    <property type="evidence" value="ECO:0007669"/>
    <property type="project" value="UniProtKB-UniRule"/>
</dbReference>
<dbReference type="GO" id="GO:0047100">
    <property type="term" value="F:glyceraldehyde-3-phosphate dehydrogenase (NADP+) (phosphorylating) activity"/>
    <property type="evidence" value="ECO:0007669"/>
    <property type="project" value="RHEA"/>
</dbReference>
<dbReference type="GO" id="GO:0051287">
    <property type="term" value="F:NAD binding"/>
    <property type="evidence" value="ECO:0007669"/>
    <property type="project" value="InterPro"/>
</dbReference>
<dbReference type="GO" id="GO:0050661">
    <property type="term" value="F:NADP binding"/>
    <property type="evidence" value="ECO:0007669"/>
    <property type="project" value="InterPro"/>
</dbReference>
<dbReference type="GO" id="GO:0006096">
    <property type="term" value="P:glycolytic process"/>
    <property type="evidence" value="ECO:0007669"/>
    <property type="project" value="UniProtKB-UniRule"/>
</dbReference>
<dbReference type="CDD" id="cd18127">
    <property type="entry name" value="GAPDH_II_C"/>
    <property type="match status" value="1"/>
</dbReference>
<dbReference type="CDD" id="cd02278">
    <property type="entry name" value="GAPDH_II_N"/>
    <property type="match status" value="1"/>
</dbReference>
<dbReference type="Gene3D" id="3.30.360.10">
    <property type="entry name" value="Dihydrodipicolinate Reductase, domain 2"/>
    <property type="match status" value="1"/>
</dbReference>
<dbReference type="Gene3D" id="3.40.50.720">
    <property type="entry name" value="NAD(P)-binding Rossmann-like Domain"/>
    <property type="match status" value="1"/>
</dbReference>
<dbReference type="HAMAP" id="MF_00559">
    <property type="entry name" value="G3P_dehdrog_arch"/>
    <property type="match status" value="1"/>
</dbReference>
<dbReference type="InterPro" id="IPR020831">
    <property type="entry name" value="GlycerAld/Erythrose_P_DH"/>
</dbReference>
<dbReference type="InterPro" id="IPR020830">
    <property type="entry name" value="GlycerAld_3-P_DH_AS"/>
</dbReference>
<dbReference type="InterPro" id="IPR020829">
    <property type="entry name" value="GlycerAld_3-P_DH_cat"/>
</dbReference>
<dbReference type="InterPro" id="IPR020828">
    <property type="entry name" value="GlycerAld_3-P_DH_NAD(P)-bd"/>
</dbReference>
<dbReference type="InterPro" id="IPR006436">
    <property type="entry name" value="Glyceraldehyde-3-P_DH_2_arc"/>
</dbReference>
<dbReference type="InterPro" id="IPR036291">
    <property type="entry name" value="NAD(P)-bd_dom_sf"/>
</dbReference>
<dbReference type="NCBIfam" id="TIGR01546">
    <property type="entry name" value="GAPDH-II_archae"/>
    <property type="match status" value="1"/>
</dbReference>
<dbReference type="NCBIfam" id="NF003251">
    <property type="entry name" value="PRK04207.1"/>
    <property type="match status" value="1"/>
</dbReference>
<dbReference type="Pfam" id="PF02800">
    <property type="entry name" value="Gp_dh_C"/>
    <property type="match status" value="1"/>
</dbReference>
<dbReference type="Pfam" id="PF00044">
    <property type="entry name" value="Gp_dh_N"/>
    <property type="match status" value="1"/>
</dbReference>
<dbReference type="PIRSF" id="PIRSF000149">
    <property type="entry name" value="GAP_DH"/>
    <property type="match status" value="1"/>
</dbReference>
<dbReference type="SMART" id="SM00846">
    <property type="entry name" value="Gp_dh_N"/>
    <property type="match status" value="1"/>
</dbReference>
<dbReference type="SUPFAM" id="SSF55347">
    <property type="entry name" value="Glyceraldehyde-3-phosphate dehydrogenase-like, C-terminal domain"/>
    <property type="match status" value="1"/>
</dbReference>
<dbReference type="SUPFAM" id="SSF51735">
    <property type="entry name" value="NAD(P)-binding Rossmann-fold domains"/>
    <property type="match status" value="1"/>
</dbReference>
<dbReference type="PROSITE" id="PS00071">
    <property type="entry name" value="GAPDH"/>
    <property type="match status" value="1"/>
</dbReference>
<organism>
    <name type="scientific">Methanopyrus kandleri (strain AV19 / DSM 6324 / JCM 9639 / NBRC 100938)</name>
    <dbReference type="NCBI Taxonomy" id="190192"/>
    <lineage>
        <taxon>Archaea</taxon>
        <taxon>Methanobacteriati</taxon>
        <taxon>Methanobacteriota</taxon>
        <taxon>Methanomada group</taxon>
        <taxon>Methanopyri</taxon>
        <taxon>Methanopyrales</taxon>
        <taxon>Methanopyraceae</taxon>
        <taxon>Methanopyrus</taxon>
    </lineage>
</organism>
<sequence>MADVSVLINGYGTIGKRVADAVDAQRDMEVLGVVKTSPDYLARLAVEEYGYPLFVPEDRVERFEDAGIETEGTVEDVVLNAEDYGLDVVVDCTPEGIGARNKETLYEKAGVKAIFQGGEEAEVAEVSFVAQCNYEEALGADYVRCVSCNTTALCRTLGTLKEEFELGRVYVTIVRRAADPHQVKKGPINAIAPNPVTVPSHHGPDVKTVMPDIDITTAAVKVPTTLMHMHVVRVELKEEVTSDDVIDAFEEARRIWVVPHGEGLGSTAELIELGRDLGRKRYDLYEILVWEESINVEDGVLYYMQAVHQEADVVPENVDAIRAMTELEEDPEASMDATDSALGVLNSPPL</sequence>
<comment type="catalytic activity">
    <reaction evidence="1">
        <text>D-glyceraldehyde 3-phosphate + phosphate + NADP(+) = (2R)-3-phospho-glyceroyl phosphate + NADPH + H(+)</text>
        <dbReference type="Rhea" id="RHEA:10296"/>
        <dbReference type="ChEBI" id="CHEBI:15378"/>
        <dbReference type="ChEBI" id="CHEBI:43474"/>
        <dbReference type="ChEBI" id="CHEBI:57604"/>
        <dbReference type="ChEBI" id="CHEBI:57783"/>
        <dbReference type="ChEBI" id="CHEBI:58349"/>
        <dbReference type="ChEBI" id="CHEBI:59776"/>
        <dbReference type="EC" id="1.2.1.59"/>
    </reaction>
</comment>
<comment type="catalytic activity">
    <reaction evidence="1">
        <text>D-glyceraldehyde 3-phosphate + phosphate + NAD(+) = (2R)-3-phospho-glyceroyl phosphate + NADH + H(+)</text>
        <dbReference type="Rhea" id="RHEA:10300"/>
        <dbReference type="ChEBI" id="CHEBI:15378"/>
        <dbReference type="ChEBI" id="CHEBI:43474"/>
        <dbReference type="ChEBI" id="CHEBI:57540"/>
        <dbReference type="ChEBI" id="CHEBI:57604"/>
        <dbReference type="ChEBI" id="CHEBI:57945"/>
        <dbReference type="ChEBI" id="CHEBI:59776"/>
        <dbReference type="EC" id="1.2.1.59"/>
    </reaction>
</comment>
<comment type="pathway">
    <text evidence="1">Carbohydrate degradation; glycolysis; pyruvate from D-glyceraldehyde 3-phosphate: step 1/5.</text>
</comment>
<comment type="subunit">
    <text evidence="1">Homotetramer.</text>
</comment>
<comment type="subcellular location">
    <subcellularLocation>
        <location evidence="1">Cytoplasm</location>
    </subcellularLocation>
</comment>
<comment type="similarity">
    <text evidence="1">Belongs to the glyceraldehyde-3-phosphate dehydrogenase family.</text>
</comment>
<protein>
    <recommendedName>
        <fullName evidence="1">Glyceraldehyde-3-phosphate dehydrogenase</fullName>
        <shortName evidence="1">GAPDH</shortName>
        <ecNumber evidence="1">1.2.1.59</ecNumber>
    </recommendedName>
    <alternativeName>
        <fullName evidence="1">NAD(P)-dependent glyceraldehyde-3-phosphate dehydrogenase</fullName>
    </alternativeName>
</protein>
<proteinExistence type="inferred from homology"/>
<accession>P58839</accession>
<reference key="1">
    <citation type="journal article" date="2002" name="Proc. Natl. Acad. Sci. U.S.A.">
        <title>The complete genome of hyperthermophile Methanopyrus kandleri AV19 and monophyly of archaeal methanogens.</title>
        <authorList>
            <person name="Slesarev A.I."/>
            <person name="Mezhevaya K.V."/>
            <person name="Makarova K.S."/>
            <person name="Polushin N.N."/>
            <person name="Shcherbinina O.V."/>
            <person name="Shakhova V.V."/>
            <person name="Belova G.I."/>
            <person name="Aravind L."/>
            <person name="Natale D.A."/>
            <person name="Rogozin I.B."/>
            <person name="Tatusov R.L."/>
            <person name="Wolf Y.I."/>
            <person name="Stetter K.O."/>
            <person name="Malykh A.G."/>
            <person name="Koonin E.V."/>
            <person name="Kozyavkin S.A."/>
        </authorList>
    </citation>
    <scope>NUCLEOTIDE SEQUENCE [LARGE SCALE GENOMIC DNA]</scope>
    <source>
        <strain>AV19 / DSM 6324 / JCM 9639 / NBRC 100938</strain>
    </source>
</reference>
<gene>
    <name evidence="1" type="primary">gap</name>
    <name type="synonym">gapA</name>
    <name type="ordered locus">MK0618</name>
</gene>